<reference key="1">
    <citation type="journal article" date="2008" name="Antimicrob. Agents Chemother.">
        <title>Whole-genome pyrosequencing of an epidemic multidrug-resistant Acinetobacter baumannii strain belonging to the European clone II group.</title>
        <authorList>
            <person name="Iacono M."/>
            <person name="Villa L."/>
            <person name="Fortini D."/>
            <person name="Bordoni R."/>
            <person name="Imperi F."/>
            <person name="Bonnal R.J."/>
            <person name="Sicheritz-Ponten T."/>
            <person name="De Bellis G."/>
            <person name="Visca P."/>
            <person name="Cassone A."/>
            <person name="Carattoli A."/>
        </authorList>
    </citation>
    <scope>NUCLEOTIDE SEQUENCE [LARGE SCALE GENOMIC DNA]</scope>
    <source>
        <strain>ACICU</strain>
    </source>
</reference>
<protein>
    <recommendedName>
        <fullName evidence="1">YcgL domain-containing protein ACICU_01724</fullName>
    </recommendedName>
</protein>
<sequence length="101" mass="11473">MHCDIYRSSKKDEMYIYIARPNYPDETEQADPFEKVPEAVLQAFGRATFVMHLELAPTRKLARVNVLHVLDSLQTKGFFIQMPPEGLINPNAVEPEGLRGA</sequence>
<proteinExistence type="inferred from homology"/>
<accession>B2I0B1</accession>
<evidence type="ECO:0000255" key="1">
    <source>
        <dbReference type="HAMAP-Rule" id="MF_01866"/>
    </source>
</evidence>
<gene>
    <name type="ordered locus">ACICU_01724</name>
</gene>
<organism>
    <name type="scientific">Acinetobacter baumannii (strain ACICU)</name>
    <dbReference type="NCBI Taxonomy" id="405416"/>
    <lineage>
        <taxon>Bacteria</taxon>
        <taxon>Pseudomonadati</taxon>
        <taxon>Pseudomonadota</taxon>
        <taxon>Gammaproteobacteria</taxon>
        <taxon>Moraxellales</taxon>
        <taxon>Moraxellaceae</taxon>
        <taxon>Acinetobacter</taxon>
        <taxon>Acinetobacter calcoaceticus/baumannii complex</taxon>
    </lineage>
</organism>
<dbReference type="EMBL" id="CP000863">
    <property type="protein sequence ID" value="ACC57036.1"/>
    <property type="molecule type" value="Genomic_DNA"/>
</dbReference>
<dbReference type="RefSeq" id="WP_000543500.1">
    <property type="nucleotide sequence ID" value="NC_010611.1"/>
</dbReference>
<dbReference type="SMR" id="B2I0B1"/>
<dbReference type="KEGG" id="abc:ACICU_01724"/>
<dbReference type="HOGENOM" id="CLU_155118_0_1_6"/>
<dbReference type="Proteomes" id="UP000008839">
    <property type="component" value="Chromosome"/>
</dbReference>
<dbReference type="Gene3D" id="3.10.510.20">
    <property type="entry name" value="YcgL domain"/>
    <property type="match status" value="1"/>
</dbReference>
<dbReference type="HAMAP" id="MF_01866">
    <property type="entry name" value="UPF0745"/>
    <property type="match status" value="1"/>
</dbReference>
<dbReference type="InterPro" id="IPR038068">
    <property type="entry name" value="YcgL-like_sf"/>
</dbReference>
<dbReference type="InterPro" id="IPR027354">
    <property type="entry name" value="YcgL_dom"/>
</dbReference>
<dbReference type="PANTHER" id="PTHR38109">
    <property type="entry name" value="PROTEIN YCGL"/>
    <property type="match status" value="1"/>
</dbReference>
<dbReference type="PANTHER" id="PTHR38109:SF1">
    <property type="entry name" value="PROTEIN YCGL"/>
    <property type="match status" value="1"/>
</dbReference>
<dbReference type="Pfam" id="PF05166">
    <property type="entry name" value="YcgL"/>
    <property type="match status" value="1"/>
</dbReference>
<dbReference type="SUPFAM" id="SSF160191">
    <property type="entry name" value="YcgL-like"/>
    <property type="match status" value="1"/>
</dbReference>
<dbReference type="PROSITE" id="PS51648">
    <property type="entry name" value="YCGL"/>
    <property type="match status" value="1"/>
</dbReference>
<name>Y1724_ACIBC</name>
<feature type="chain" id="PRO_0000375267" description="YcgL domain-containing protein ACICU_01724">
    <location>
        <begin position="1"/>
        <end position="101"/>
    </location>
</feature>
<feature type="domain" description="YcgL" evidence="1">
    <location>
        <begin position="1"/>
        <end position="92"/>
    </location>
</feature>